<evidence type="ECO:0000256" key="1">
    <source>
        <dbReference type="SAM" id="MobiDB-lite"/>
    </source>
</evidence>
<evidence type="ECO:0000269" key="2">
    <source>
    </source>
</evidence>
<evidence type="ECO:0007744" key="3">
    <source>
    </source>
</evidence>
<keyword id="KW-0597">Phosphoprotein</keyword>
<keyword id="KW-1185">Reference proteome</keyword>
<gene>
    <name type="ordered locus">YMR160W</name>
    <name type="ORF">YM8520.09</name>
</gene>
<comment type="miscellaneous">
    <text evidence="2">Present with 279 molecules/cell in log phase SD medium.</text>
</comment>
<proteinExistence type="evidence at protein level"/>
<sequence>MDVVQQKQDKQLQHQTQEQQQIREDQQEVPPQRPRQQNRWKPWWNSTADDEPNTGRIAEYPNGQGRSSPTTDFQDSVNSNNDNKGIWSKIASFATSRYRSAPIVVDDNTRYSQLNTEQINFLENEAKDIISKKSKSWCWYEAIPHISNSSNIIDSIDTPGIISVSGTGSAKCPLPLNKYPGEGGNPGYNVFINDSLILPSDNPLNFLHVQPLRTKVLNTIKNYYNFPNEQHLYLRQKKTALLKDKRIIIISVVGDLPEKYEQRSLESQRSAYYLSRKLSQNLAQEQPQRVLTLSFQCPLHNQDLIPTYKECVELLNHWAHLFKEVDSIFFVGVYHSVPLTLLLAKYIVQNNEVLEFDENTTVSVLSFQSCLQGYRFWDHSTDFTSNSYNNLGSNSSTNENDSNDHDSNNDFTTKSQQIKEKQLFQGIDKKQQDTLSKIKNYRRIDSSESKLVQDALDWLLFNWDTFRLTFFGKLYDNFMTISEKLAIDYNHPKILRNLWCNGKYMGIDLKNANNLNLDTDDEATSNINDVHVRTPNFESRLKIPTNRLFEITLWDILMITENLGYKQFIPIINLLSPFFISRSFNDYTLPPNIRKQYQNSNKIWLQEMDSKWKMNGHQLNYDQREGESLGSSSESLLPENISTVKDFLQFVQYQNEKSSDFVRIYSDIYDDDKVYKCFLYNTIFTKNPLSRKHLRLNIDLDTPTSILNTVNQYDLVWKIHDSFSKLIQLKNLPQREIPHALRLSISLNCFLDSTTSTSGPVFQRDTVEALRRLTEIWRTYQDWSPPTRGLKHLRDILSVLAMYDNPKNLINDVRRT</sequence>
<feature type="chain" id="PRO_0000203313" description="Uncharacterized protein YMR160W">
    <location>
        <begin position="1"/>
        <end position="816"/>
    </location>
</feature>
<feature type="region of interest" description="Disordered" evidence="1">
    <location>
        <begin position="1"/>
        <end position="81"/>
    </location>
</feature>
<feature type="region of interest" description="Disordered" evidence="1">
    <location>
        <begin position="391"/>
        <end position="411"/>
    </location>
</feature>
<feature type="compositionally biased region" description="Low complexity" evidence="1">
    <location>
        <begin position="28"/>
        <end position="44"/>
    </location>
</feature>
<feature type="compositionally biased region" description="Polar residues" evidence="1">
    <location>
        <begin position="64"/>
        <end position="81"/>
    </location>
</feature>
<feature type="compositionally biased region" description="Low complexity" evidence="1">
    <location>
        <begin position="391"/>
        <end position="400"/>
    </location>
</feature>
<feature type="modified residue" description="Phosphoserine" evidence="3">
    <location>
        <position position="76"/>
    </location>
</feature>
<feature type="modified residue" description="Phosphoserine" evidence="3">
    <location>
        <position position="79"/>
    </location>
</feature>
<protein>
    <recommendedName>
        <fullName>Uncharacterized protein YMR160W</fullName>
    </recommendedName>
</protein>
<dbReference type="EMBL" id="Z49705">
    <property type="protein sequence ID" value="CAA89796.1"/>
    <property type="molecule type" value="Genomic_DNA"/>
</dbReference>
<dbReference type="EMBL" id="AY692574">
    <property type="protein sequence ID" value="AAT92593.1"/>
    <property type="molecule type" value="Genomic_DNA"/>
</dbReference>
<dbReference type="EMBL" id="BK006946">
    <property type="protein sequence ID" value="DAA10056.1"/>
    <property type="molecule type" value="Genomic_DNA"/>
</dbReference>
<dbReference type="PIR" id="S54518">
    <property type="entry name" value="S54518"/>
</dbReference>
<dbReference type="BioGRID" id="35337">
    <property type="interactions" value="87"/>
</dbReference>
<dbReference type="DIP" id="DIP-5069N"/>
<dbReference type="FunCoup" id="Q03823">
    <property type="interactions" value="4"/>
</dbReference>
<dbReference type="IntAct" id="Q03823">
    <property type="interactions" value="2"/>
</dbReference>
<dbReference type="STRING" id="4932.YMR160W"/>
<dbReference type="iPTMnet" id="Q03823"/>
<dbReference type="PaxDb" id="4932-YMR160W"/>
<dbReference type="PeptideAtlas" id="Q03823"/>
<dbReference type="EnsemblFungi" id="YMR160W_mRNA">
    <property type="protein sequence ID" value="YMR160W"/>
    <property type="gene ID" value="YMR160W"/>
</dbReference>
<dbReference type="KEGG" id="sce:YMR160W"/>
<dbReference type="AGR" id="SGD:S000004770"/>
<dbReference type="SGD" id="S000004770">
    <property type="gene designation" value="YMR160W"/>
</dbReference>
<dbReference type="VEuPathDB" id="FungiDB:YMR160W"/>
<dbReference type="eggNOG" id="ENOG502QXS0">
    <property type="taxonomic scope" value="Eukaryota"/>
</dbReference>
<dbReference type="HOGENOM" id="CLU_020648_0_0_1"/>
<dbReference type="InParanoid" id="Q03823"/>
<dbReference type="OMA" id="GYRFWDH"/>
<dbReference type="OrthoDB" id="3972942at2759"/>
<dbReference type="BioCyc" id="YEAST:G3O-32850-MONOMER"/>
<dbReference type="BioGRID-ORCS" id="855195">
    <property type="hits" value="2 hits in 10 CRISPR screens"/>
</dbReference>
<dbReference type="PRO" id="PR:Q03823"/>
<dbReference type="Proteomes" id="UP000002311">
    <property type="component" value="Chromosome XIII"/>
</dbReference>
<dbReference type="RNAct" id="Q03823">
    <property type="molecule type" value="protein"/>
</dbReference>
<dbReference type="GO" id="GO:0098853">
    <property type="term" value="C:endoplasmic reticulum-vacuole membrane contact site"/>
    <property type="evidence" value="ECO:0000314"/>
    <property type="project" value="SGD"/>
</dbReference>
<dbReference type="GO" id="GO:0000329">
    <property type="term" value="C:fungal-type vacuole membrane"/>
    <property type="evidence" value="ECO:0007005"/>
    <property type="project" value="SGD"/>
</dbReference>
<dbReference type="GO" id="GO:0005778">
    <property type="term" value="C:peroxisomal membrane"/>
    <property type="evidence" value="ECO:0000314"/>
    <property type="project" value="SGD"/>
</dbReference>
<dbReference type="GO" id="GO:1990816">
    <property type="term" value="C:vacuole-mitochondrion membrane contact site"/>
    <property type="evidence" value="ECO:0000314"/>
    <property type="project" value="SGD"/>
</dbReference>
<dbReference type="GO" id="GO:0006665">
    <property type="term" value="P:sphingolipid metabolic process"/>
    <property type="evidence" value="ECO:0000315"/>
    <property type="project" value="SGD"/>
</dbReference>
<accession>Q03823</accession>
<accession>D6VZY2</accession>
<organism>
    <name type="scientific">Saccharomyces cerevisiae (strain ATCC 204508 / S288c)</name>
    <name type="common">Baker's yeast</name>
    <dbReference type="NCBI Taxonomy" id="559292"/>
    <lineage>
        <taxon>Eukaryota</taxon>
        <taxon>Fungi</taxon>
        <taxon>Dikarya</taxon>
        <taxon>Ascomycota</taxon>
        <taxon>Saccharomycotina</taxon>
        <taxon>Saccharomycetes</taxon>
        <taxon>Saccharomycetales</taxon>
        <taxon>Saccharomycetaceae</taxon>
        <taxon>Saccharomyces</taxon>
    </lineage>
</organism>
<reference key="1">
    <citation type="journal article" date="1997" name="Nature">
        <title>The nucleotide sequence of Saccharomyces cerevisiae chromosome XIII.</title>
        <authorList>
            <person name="Bowman S."/>
            <person name="Churcher C.M."/>
            <person name="Badcock K."/>
            <person name="Brown D."/>
            <person name="Chillingworth T."/>
            <person name="Connor R."/>
            <person name="Dedman K."/>
            <person name="Devlin K."/>
            <person name="Gentles S."/>
            <person name="Hamlin N."/>
            <person name="Hunt S."/>
            <person name="Jagels K."/>
            <person name="Lye G."/>
            <person name="Moule S."/>
            <person name="Odell C."/>
            <person name="Pearson D."/>
            <person name="Rajandream M.A."/>
            <person name="Rice P."/>
            <person name="Skelton J."/>
            <person name="Walsh S.V."/>
            <person name="Whitehead S."/>
            <person name="Barrell B.G."/>
        </authorList>
    </citation>
    <scope>NUCLEOTIDE SEQUENCE [LARGE SCALE GENOMIC DNA]</scope>
    <source>
        <strain>ATCC 204508 / S288c</strain>
    </source>
</reference>
<reference key="2">
    <citation type="journal article" date="2014" name="G3 (Bethesda)">
        <title>The reference genome sequence of Saccharomyces cerevisiae: Then and now.</title>
        <authorList>
            <person name="Engel S.R."/>
            <person name="Dietrich F.S."/>
            <person name="Fisk D.G."/>
            <person name="Binkley G."/>
            <person name="Balakrishnan R."/>
            <person name="Costanzo M.C."/>
            <person name="Dwight S.S."/>
            <person name="Hitz B.C."/>
            <person name="Karra K."/>
            <person name="Nash R.S."/>
            <person name="Weng S."/>
            <person name="Wong E.D."/>
            <person name="Lloyd P."/>
            <person name="Skrzypek M.S."/>
            <person name="Miyasato S.R."/>
            <person name="Simison M."/>
            <person name="Cherry J.M."/>
        </authorList>
    </citation>
    <scope>GENOME REANNOTATION</scope>
    <source>
        <strain>ATCC 204508 / S288c</strain>
    </source>
</reference>
<reference key="3">
    <citation type="journal article" date="2007" name="Genome Res.">
        <title>Approaching a complete repository of sequence-verified protein-encoding clones for Saccharomyces cerevisiae.</title>
        <authorList>
            <person name="Hu Y."/>
            <person name="Rolfs A."/>
            <person name="Bhullar B."/>
            <person name="Murthy T.V.S."/>
            <person name="Zhu C."/>
            <person name="Berger M.F."/>
            <person name="Camargo A.A."/>
            <person name="Kelley F."/>
            <person name="McCarron S."/>
            <person name="Jepson D."/>
            <person name="Richardson A."/>
            <person name="Raphael J."/>
            <person name="Moreira D."/>
            <person name="Taycher E."/>
            <person name="Zuo D."/>
            <person name="Mohr S."/>
            <person name="Kane M.F."/>
            <person name="Williamson J."/>
            <person name="Simpson A.J.G."/>
            <person name="Bulyk M.L."/>
            <person name="Harlow E."/>
            <person name="Marsischky G."/>
            <person name="Kolodner R.D."/>
            <person name="LaBaer J."/>
        </authorList>
    </citation>
    <scope>NUCLEOTIDE SEQUENCE [GENOMIC DNA]</scope>
    <source>
        <strain>ATCC 204508 / S288c</strain>
    </source>
</reference>
<reference key="4">
    <citation type="journal article" date="2003" name="Nature">
        <title>Global analysis of protein expression in yeast.</title>
        <authorList>
            <person name="Ghaemmaghami S."/>
            <person name="Huh W.-K."/>
            <person name="Bower K."/>
            <person name="Howson R.W."/>
            <person name="Belle A."/>
            <person name="Dephoure N."/>
            <person name="O'Shea E.K."/>
            <person name="Weissman J.S."/>
        </authorList>
    </citation>
    <scope>LEVEL OF PROTEIN EXPRESSION [LARGE SCALE ANALYSIS]</scope>
</reference>
<reference key="5">
    <citation type="journal article" date="2008" name="Mol. Cell. Proteomics">
        <title>A multidimensional chromatography technology for in-depth phosphoproteome analysis.</title>
        <authorList>
            <person name="Albuquerque C.P."/>
            <person name="Smolka M.B."/>
            <person name="Payne S.H."/>
            <person name="Bafna V."/>
            <person name="Eng J."/>
            <person name="Zhou H."/>
        </authorList>
    </citation>
    <scope>PHOSPHORYLATION [LARGE SCALE ANALYSIS] AT SER-76 AND SER-79</scope>
    <scope>IDENTIFICATION BY MASS SPECTROMETRY [LARGE SCALE ANALYSIS]</scope>
</reference>
<name>YM35_YEAST</name>